<reference key="1">
    <citation type="journal article" date="1997" name="Genomics">
        <title>Identification of two novel human putative serine/threonine kinases, VRK1 and VRK2, with structural similarity to Vaccinia virus B1R kinase.</title>
        <authorList>
            <person name="Nezu J."/>
            <person name="Oku A."/>
            <person name="Jones M.H."/>
            <person name="Shimane M."/>
        </authorList>
    </citation>
    <scope>NUCLEOTIDE SEQUENCE [MRNA] (ISOFORM 1)</scope>
    <scope>TISSUE SPECIFICITY</scope>
    <scope>VARIANT VAL-167</scope>
    <source>
        <tissue>Liver</tissue>
    </source>
</reference>
<reference key="2">
    <citation type="journal article" date="2006" name="FEBS J.">
        <title>The subcellular localization of vaccinia-related kinase-2 (VRK2) isoforms determines their different effect on p53 stability in tumour cell lines.</title>
        <authorList>
            <person name="Blanco S."/>
            <person name="Klimcakova L."/>
            <person name="Vega F.M."/>
            <person name="Lazo P.A."/>
        </authorList>
    </citation>
    <scope>NUCLEOTIDE SEQUENCE [MRNA] (ISOFORM 2)</scope>
    <scope>IDENTIFICATION (ISOFORM 1)</scope>
    <scope>FUNCTION</scope>
    <scope>CATALYTIC ACTIVITY</scope>
    <scope>SUBCELLULAR LOCATION</scope>
    <scope>TISSUE SPECIFICITY</scope>
    <scope>AUTOPHOSPHORYLATION</scope>
    <scope>VARIANT VAL-167</scope>
</reference>
<reference key="3">
    <citation type="submission" date="2003-01" db="EMBL/GenBank/DDBJ databases">
        <title>Identification of 6 different isoforms for Vaccinia-related kinase 2 (VRK2) gene.</title>
        <authorList>
            <person name="Suriyapperuma S.P."/>
            <person name="Sarfarazi M."/>
        </authorList>
    </citation>
    <scope>NUCLEOTIDE SEQUENCE [MRNA] (ISOFORMS 1; 3; 4 AND 5)</scope>
</reference>
<reference key="4">
    <citation type="journal article" date="2004" name="Nat. Genet.">
        <title>Complete sequencing and characterization of 21,243 full-length human cDNAs.</title>
        <authorList>
            <person name="Ota T."/>
            <person name="Suzuki Y."/>
            <person name="Nishikawa T."/>
            <person name="Otsuki T."/>
            <person name="Sugiyama T."/>
            <person name="Irie R."/>
            <person name="Wakamatsu A."/>
            <person name="Hayashi K."/>
            <person name="Sato H."/>
            <person name="Nagai K."/>
            <person name="Kimura K."/>
            <person name="Makita H."/>
            <person name="Sekine M."/>
            <person name="Obayashi M."/>
            <person name="Nishi T."/>
            <person name="Shibahara T."/>
            <person name="Tanaka T."/>
            <person name="Ishii S."/>
            <person name="Yamamoto J."/>
            <person name="Saito K."/>
            <person name="Kawai Y."/>
            <person name="Isono Y."/>
            <person name="Nakamura Y."/>
            <person name="Nagahari K."/>
            <person name="Murakami K."/>
            <person name="Yasuda T."/>
            <person name="Iwayanagi T."/>
            <person name="Wagatsuma M."/>
            <person name="Shiratori A."/>
            <person name="Sudo H."/>
            <person name="Hosoiri T."/>
            <person name="Kaku Y."/>
            <person name="Kodaira H."/>
            <person name="Kondo H."/>
            <person name="Sugawara M."/>
            <person name="Takahashi M."/>
            <person name="Kanda K."/>
            <person name="Yokoi T."/>
            <person name="Furuya T."/>
            <person name="Kikkawa E."/>
            <person name="Omura Y."/>
            <person name="Abe K."/>
            <person name="Kamihara K."/>
            <person name="Katsuta N."/>
            <person name="Sato K."/>
            <person name="Tanikawa M."/>
            <person name="Yamazaki M."/>
            <person name="Ninomiya K."/>
            <person name="Ishibashi T."/>
            <person name="Yamashita H."/>
            <person name="Murakawa K."/>
            <person name="Fujimori K."/>
            <person name="Tanai H."/>
            <person name="Kimata M."/>
            <person name="Watanabe M."/>
            <person name="Hiraoka S."/>
            <person name="Chiba Y."/>
            <person name="Ishida S."/>
            <person name="Ono Y."/>
            <person name="Takiguchi S."/>
            <person name="Watanabe S."/>
            <person name="Yosida M."/>
            <person name="Hotuta T."/>
            <person name="Kusano J."/>
            <person name="Kanehori K."/>
            <person name="Takahashi-Fujii A."/>
            <person name="Hara H."/>
            <person name="Tanase T.-O."/>
            <person name="Nomura Y."/>
            <person name="Togiya S."/>
            <person name="Komai F."/>
            <person name="Hara R."/>
            <person name="Takeuchi K."/>
            <person name="Arita M."/>
            <person name="Imose N."/>
            <person name="Musashino K."/>
            <person name="Yuuki H."/>
            <person name="Oshima A."/>
            <person name="Sasaki N."/>
            <person name="Aotsuka S."/>
            <person name="Yoshikawa Y."/>
            <person name="Matsunawa H."/>
            <person name="Ichihara T."/>
            <person name="Shiohata N."/>
            <person name="Sano S."/>
            <person name="Moriya S."/>
            <person name="Momiyama H."/>
            <person name="Satoh N."/>
            <person name="Takami S."/>
            <person name="Terashima Y."/>
            <person name="Suzuki O."/>
            <person name="Nakagawa S."/>
            <person name="Senoh A."/>
            <person name="Mizoguchi H."/>
            <person name="Goto Y."/>
            <person name="Shimizu F."/>
            <person name="Wakebe H."/>
            <person name="Hishigaki H."/>
            <person name="Watanabe T."/>
            <person name="Sugiyama A."/>
            <person name="Takemoto M."/>
            <person name="Kawakami B."/>
            <person name="Yamazaki M."/>
            <person name="Watanabe K."/>
            <person name="Kumagai A."/>
            <person name="Itakura S."/>
            <person name="Fukuzumi Y."/>
            <person name="Fujimori Y."/>
            <person name="Komiyama M."/>
            <person name="Tashiro H."/>
            <person name="Tanigami A."/>
            <person name="Fujiwara T."/>
            <person name="Ono T."/>
            <person name="Yamada K."/>
            <person name="Fujii Y."/>
            <person name="Ozaki K."/>
            <person name="Hirao M."/>
            <person name="Ohmori Y."/>
            <person name="Kawabata A."/>
            <person name="Hikiji T."/>
            <person name="Kobatake N."/>
            <person name="Inagaki H."/>
            <person name="Ikema Y."/>
            <person name="Okamoto S."/>
            <person name="Okitani R."/>
            <person name="Kawakami T."/>
            <person name="Noguchi S."/>
            <person name="Itoh T."/>
            <person name="Shigeta K."/>
            <person name="Senba T."/>
            <person name="Matsumura K."/>
            <person name="Nakajima Y."/>
            <person name="Mizuno T."/>
            <person name="Morinaga M."/>
            <person name="Sasaki M."/>
            <person name="Togashi T."/>
            <person name="Oyama M."/>
            <person name="Hata H."/>
            <person name="Watanabe M."/>
            <person name="Komatsu T."/>
            <person name="Mizushima-Sugano J."/>
            <person name="Satoh T."/>
            <person name="Shirai Y."/>
            <person name="Takahashi Y."/>
            <person name="Nakagawa K."/>
            <person name="Okumura K."/>
            <person name="Nagase T."/>
            <person name="Nomura N."/>
            <person name="Kikuchi H."/>
            <person name="Masuho Y."/>
            <person name="Yamashita R."/>
            <person name="Nakai K."/>
            <person name="Yada T."/>
            <person name="Nakamura Y."/>
            <person name="Ohara O."/>
            <person name="Isogai T."/>
            <person name="Sugano S."/>
        </authorList>
    </citation>
    <scope>NUCLEOTIDE SEQUENCE [LARGE SCALE MRNA] (ISOFORM 4)</scope>
    <source>
        <tissue>Colon</tissue>
    </source>
</reference>
<reference key="5">
    <citation type="submission" date="2005-04" db="EMBL/GenBank/DDBJ databases">
        <authorList>
            <person name="Totoki Y."/>
            <person name="Toyoda A."/>
            <person name="Takeda T."/>
            <person name="Sakaki Y."/>
            <person name="Tanaka A."/>
            <person name="Yokoyama S."/>
        </authorList>
    </citation>
    <scope>NUCLEOTIDE SEQUENCE [LARGE SCALE MRNA] (ISOFORM 1)</scope>
    <source>
        <tissue>Testis</tissue>
    </source>
</reference>
<reference key="6">
    <citation type="journal article" date="2005" name="Nature">
        <title>Generation and annotation of the DNA sequences of human chromosomes 2 and 4.</title>
        <authorList>
            <person name="Hillier L.W."/>
            <person name="Graves T.A."/>
            <person name="Fulton R.S."/>
            <person name="Fulton L.A."/>
            <person name="Pepin K.H."/>
            <person name="Minx P."/>
            <person name="Wagner-McPherson C."/>
            <person name="Layman D."/>
            <person name="Wylie K."/>
            <person name="Sekhon M."/>
            <person name="Becker M.C."/>
            <person name="Fewell G.A."/>
            <person name="Delehaunty K.D."/>
            <person name="Miner T.L."/>
            <person name="Nash W.E."/>
            <person name="Kremitzki C."/>
            <person name="Oddy L."/>
            <person name="Du H."/>
            <person name="Sun H."/>
            <person name="Bradshaw-Cordum H."/>
            <person name="Ali J."/>
            <person name="Carter J."/>
            <person name="Cordes M."/>
            <person name="Harris A."/>
            <person name="Isak A."/>
            <person name="van Brunt A."/>
            <person name="Nguyen C."/>
            <person name="Du F."/>
            <person name="Courtney L."/>
            <person name="Kalicki J."/>
            <person name="Ozersky P."/>
            <person name="Abbott S."/>
            <person name="Armstrong J."/>
            <person name="Belter E.A."/>
            <person name="Caruso L."/>
            <person name="Cedroni M."/>
            <person name="Cotton M."/>
            <person name="Davidson T."/>
            <person name="Desai A."/>
            <person name="Elliott G."/>
            <person name="Erb T."/>
            <person name="Fronick C."/>
            <person name="Gaige T."/>
            <person name="Haakenson W."/>
            <person name="Haglund K."/>
            <person name="Holmes A."/>
            <person name="Harkins R."/>
            <person name="Kim K."/>
            <person name="Kruchowski S.S."/>
            <person name="Strong C.M."/>
            <person name="Grewal N."/>
            <person name="Goyea E."/>
            <person name="Hou S."/>
            <person name="Levy A."/>
            <person name="Martinka S."/>
            <person name="Mead K."/>
            <person name="McLellan M.D."/>
            <person name="Meyer R."/>
            <person name="Randall-Maher J."/>
            <person name="Tomlinson C."/>
            <person name="Dauphin-Kohlberg S."/>
            <person name="Kozlowicz-Reilly A."/>
            <person name="Shah N."/>
            <person name="Swearengen-Shahid S."/>
            <person name="Snider J."/>
            <person name="Strong J.T."/>
            <person name="Thompson J."/>
            <person name="Yoakum M."/>
            <person name="Leonard S."/>
            <person name="Pearman C."/>
            <person name="Trani L."/>
            <person name="Radionenko M."/>
            <person name="Waligorski J.E."/>
            <person name="Wang C."/>
            <person name="Rock S.M."/>
            <person name="Tin-Wollam A.-M."/>
            <person name="Maupin R."/>
            <person name="Latreille P."/>
            <person name="Wendl M.C."/>
            <person name="Yang S.-P."/>
            <person name="Pohl C."/>
            <person name="Wallis J.W."/>
            <person name="Spieth J."/>
            <person name="Bieri T.A."/>
            <person name="Berkowicz N."/>
            <person name="Nelson J.O."/>
            <person name="Osborne J."/>
            <person name="Ding L."/>
            <person name="Meyer R."/>
            <person name="Sabo A."/>
            <person name="Shotland Y."/>
            <person name="Sinha P."/>
            <person name="Wohldmann P.E."/>
            <person name="Cook L.L."/>
            <person name="Hickenbotham M.T."/>
            <person name="Eldred J."/>
            <person name="Williams D."/>
            <person name="Jones T.A."/>
            <person name="She X."/>
            <person name="Ciccarelli F.D."/>
            <person name="Izaurralde E."/>
            <person name="Taylor J."/>
            <person name="Schmutz J."/>
            <person name="Myers R.M."/>
            <person name="Cox D.R."/>
            <person name="Huang X."/>
            <person name="McPherson J.D."/>
            <person name="Mardis E.R."/>
            <person name="Clifton S.W."/>
            <person name="Warren W.C."/>
            <person name="Chinwalla A.T."/>
            <person name="Eddy S.R."/>
            <person name="Marra M.A."/>
            <person name="Ovcharenko I."/>
            <person name="Furey T.S."/>
            <person name="Miller W."/>
            <person name="Eichler E.E."/>
            <person name="Bork P."/>
            <person name="Suyama M."/>
            <person name="Torrents D."/>
            <person name="Waterston R.H."/>
            <person name="Wilson R.K."/>
        </authorList>
    </citation>
    <scope>NUCLEOTIDE SEQUENCE [LARGE SCALE GENOMIC DNA]</scope>
</reference>
<reference key="7">
    <citation type="submission" date="2005-09" db="EMBL/GenBank/DDBJ databases">
        <authorList>
            <person name="Mural R.J."/>
            <person name="Istrail S."/>
            <person name="Sutton G.G."/>
            <person name="Florea L."/>
            <person name="Halpern A.L."/>
            <person name="Mobarry C.M."/>
            <person name="Lippert R."/>
            <person name="Walenz B."/>
            <person name="Shatkay H."/>
            <person name="Dew I."/>
            <person name="Miller J.R."/>
            <person name="Flanigan M.J."/>
            <person name="Edwards N.J."/>
            <person name="Bolanos R."/>
            <person name="Fasulo D."/>
            <person name="Halldorsson B.V."/>
            <person name="Hannenhalli S."/>
            <person name="Turner R."/>
            <person name="Yooseph S."/>
            <person name="Lu F."/>
            <person name="Nusskern D.R."/>
            <person name="Shue B.C."/>
            <person name="Zheng X.H."/>
            <person name="Zhong F."/>
            <person name="Delcher A.L."/>
            <person name="Huson D.H."/>
            <person name="Kravitz S.A."/>
            <person name="Mouchard L."/>
            <person name="Reinert K."/>
            <person name="Remington K.A."/>
            <person name="Clark A.G."/>
            <person name="Waterman M.S."/>
            <person name="Eichler E.E."/>
            <person name="Adams M.D."/>
            <person name="Hunkapiller M.W."/>
            <person name="Myers E.W."/>
            <person name="Venter J.C."/>
        </authorList>
    </citation>
    <scope>NUCLEOTIDE SEQUENCE [LARGE SCALE GENOMIC DNA]</scope>
</reference>
<reference key="8">
    <citation type="journal article" date="2004" name="Genome Res.">
        <title>The status, quality, and expansion of the NIH full-length cDNA project: the Mammalian Gene Collection (MGC).</title>
        <authorList>
            <consortium name="The MGC Project Team"/>
        </authorList>
    </citation>
    <scope>NUCLEOTIDE SEQUENCE [LARGE SCALE MRNA] (ISOFORM 1)</scope>
    <scope>VARIANT VAL-167</scope>
</reference>
<reference key="9">
    <citation type="journal article" date="2004" name="J. Biol. Chem.">
        <title>Characterization of three paralogous members of the Mammalian vaccinia related kinase family.</title>
        <authorList>
            <person name="Nichols R.J."/>
            <person name="Traktman P."/>
        </authorList>
    </citation>
    <scope>FUNCTION</scope>
    <scope>SUBCELLULAR LOCATION</scope>
    <scope>AUTOPHOSPHORYLATION</scope>
</reference>
<reference key="10">
    <citation type="journal article" date="2006" name="J. Gen. Virol.">
        <title>Human cellular protein VRK2 interacts specifically with Epstein-Barr virus BHRF1, a homologue of Bcl-2, and enhances cell survival.</title>
        <authorList>
            <person name="Li L.Y."/>
            <person name="Liu M.Y."/>
            <person name="Shih H.M."/>
            <person name="Tsai C.H."/>
            <person name="Chen J.Y."/>
        </authorList>
    </citation>
    <scope>INTERACTION WITH EPSTEIN-BARR VIRUS BHRF1 (MICROBIAL INFECTION)</scope>
</reference>
<reference key="11">
    <citation type="journal article" date="2006" name="Mol. Biol. Cell">
        <title>The vaccinia-related kinases phosphorylate the N' terminus of BAF, regulating its interaction with DNA and its retention in the nucleus.</title>
        <authorList>
            <person name="Nichols R.J."/>
            <person name="Wiebe M.S."/>
            <person name="Traktman P."/>
        </authorList>
    </citation>
    <scope>FUNCTION</scope>
    <scope>CATALYTIC ACTIVITY</scope>
</reference>
<reference key="12">
    <citation type="journal article" date="2007" name="Mol. Cell. Biol.">
        <title>Vaccinia-related kinase 2 modulates the stress response to hypoxia mediated by TAK1.</title>
        <authorList>
            <person name="Blanco S."/>
            <person name="Santos C."/>
            <person name="Lazo P.A."/>
        </authorList>
    </citation>
    <scope>FUNCTION</scope>
    <scope>INTERACTION WITH MAP3K7</scope>
</reference>
<reference key="13">
    <citation type="journal article" date="2008" name="Mol. Cell">
        <title>Kinase-selective enrichment enables quantitative phosphoproteomics of the kinome across the cell cycle.</title>
        <authorList>
            <person name="Daub H."/>
            <person name="Olsen J.V."/>
            <person name="Bairlein M."/>
            <person name="Gnad F."/>
            <person name="Oppermann F.S."/>
            <person name="Korner R."/>
            <person name="Greff Z."/>
            <person name="Keri G."/>
            <person name="Stemmann O."/>
            <person name="Mann M."/>
        </authorList>
    </citation>
    <scope>PHOSPHORYLATION [LARGE SCALE ANALYSIS] AT THR-336</scope>
    <scope>IDENTIFICATION BY MASS SPECTROMETRY [LARGE SCALE ANALYSIS]</scope>
    <source>
        <tissue>Cervix carcinoma</tissue>
    </source>
</reference>
<reference key="14">
    <citation type="journal article" date="2008" name="Mol. Cell. Proteomics">
        <title>Proteomics identification of nuclear Ran GTPase as an inhibitor of human VRK1 and VRK2 (vaccinia-related kinase) activities.</title>
        <authorList>
            <person name="Sanz-Garcia M."/>
            <person name="Lopez-Sanchez I."/>
            <person name="Lazo P.A."/>
        </authorList>
    </citation>
    <scope>FUNCTION</scope>
    <scope>SUBCELLULAR LOCATION</scope>
    <scope>INTERACTION WITH RAN</scope>
    <scope>ACTIVITY REGULATION</scope>
</reference>
<reference key="15">
    <citation type="journal article" date="2008" name="PLoS ONE">
        <title>Modulation of interleukin-1 transcriptional response by the interaction between VRK2 and the JIP1 scaffold protein.</title>
        <authorList>
            <person name="Blanco S."/>
            <person name="Sanz-Garcia M."/>
            <person name="Santos C.R."/>
            <person name="Lazo P.A."/>
        </authorList>
    </citation>
    <scope>FUNCTION</scope>
    <scope>SUBCELLULAR LOCATION</scope>
    <scope>INTERACTION WITH MAPK8IP1; MAPK3K7 AND MAP2K7</scope>
</reference>
<reference key="16">
    <citation type="journal article" date="2008" name="Proc. Natl. Acad. Sci. U.S.A.">
        <title>A quantitative atlas of mitotic phosphorylation.</title>
        <authorList>
            <person name="Dephoure N."/>
            <person name="Zhou C."/>
            <person name="Villen J."/>
            <person name="Beausoleil S.A."/>
            <person name="Bakalarski C.E."/>
            <person name="Elledge S.J."/>
            <person name="Gygi S.P."/>
        </authorList>
    </citation>
    <scope>IDENTIFICATION BY MASS SPECTROMETRY [LARGE SCALE ANALYSIS]</scope>
    <source>
        <tissue>Cervix carcinoma</tissue>
    </source>
</reference>
<reference key="17">
    <citation type="journal article" date="2010" name="Mol. Cell. Biol.">
        <title>VRK2 inhibits mitogen-activated protein kinase signaling and inversely correlates with ErbB2 in human breast cancer.</title>
        <authorList>
            <person name="Fernandez I.F."/>
            <person name="Blanco S."/>
            <person name="Lozano J."/>
            <person name="Lazo P.A."/>
        </authorList>
    </citation>
    <scope>FUNCTION</scope>
    <scope>SUBCELLULAR LOCATION</scope>
    <scope>INTERACTION WITH MAP2K1 AND KSR1</scope>
    <scope>TISSUE SPECIFICITY</scope>
</reference>
<reference key="18">
    <citation type="journal article" date="2010" name="Sci. Signal.">
        <title>Quantitative phosphoproteomics reveals widespread full phosphorylation site occupancy during mitosis.</title>
        <authorList>
            <person name="Olsen J.V."/>
            <person name="Vermeulen M."/>
            <person name="Santamaria A."/>
            <person name="Kumar C."/>
            <person name="Miller M.L."/>
            <person name="Jensen L.J."/>
            <person name="Gnad F."/>
            <person name="Cox J."/>
            <person name="Jensen T.S."/>
            <person name="Nigg E.A."/>
            <person name="Brunak S."/>
            <person name="Mann M."/>
        </authorList>
    </citation>
    <scope>IDENTIFICATION BY MASS SPECTROMETRY [LARGE SCALE ANALYSIS]</scope>
    <source>
        <tissue>Cervix carcinoma</tissue>
    </source>
</reference>
<reference key="19">
    <citation type="journal article" date="2013" name="J. Proteome Res.">
        <title>Toward a comprehensive characterization of a human cancer cell phosphoproteome.</title>
        <authorList>
            <person name="Zhou H."/>
            <person name="Di Palma S."/>
            <person name="Preisinger C."/>
            <person name="Peng M."/>
            <person name="Polat A.N."/>
            <person name="Heck A.J."/>
            <person name="Mohammed S."/>
        </authorList>
    </citation>
    <scope>PHOSPHORYLATION [LARGE SCALE ANALYSIS] AT SER-406</scope>
    <scope>IDENTIFICATION BY MASS SPECTROMETRY [LARGE SCALE ANALYSIS]</scope>
    <source>
        <tissue>Erythroleukemia</tissue>
    </source>
</reference>
<reference key="20">
    <citation type="journal article" date="2019" name="J. Virol.">
        <title>The Vaccinia Virus (VACV) B1 and Cellular VRK2 Kinases Promote VACV Replication Factory Formation through Phosphorylation-Dependent Inhibition of VACV B12.</title>
        <authorList>
            <person name="Rico A.B."/>
            <person name="Wang Z."/>
            <person name="Olson A.T."/>
            <person name="Linville A.C."/>
            <person name="Bullard B.L."/>
            <person name="Weaver E.A."/>
            <person name="Jones C."/>
            <person name="Wiebe M.S."/>
        </authorList>
    </citation>
    <scope>INTERACTION WITH VACCINIA VIRUS PROTEIN B12 (MICROBIAL INFECTION)</scope>
</reference>
<reference key="21">
    <citation type="journal article" date="2021" name="J. Virol.">
        <title>The Vaccinia Virus B12 Pseudokinase Represses Viral Replication via Interaction with the Cellular Kinase VRK1 and Activation of the Antiviral Effector BAF.</title>
        <authorList>
            <person name="Rico A.B."/>
            <person name="Linville A.C."/>
            <person name="Olson A.T."/>
            <person name="Wang Z."/>
            <person name="Wiebe M.S."/>
        </authorList>
    </citation>
    <scope>INTERACTION WITH VACCINIA VIRUS PROTEIN B12 (MICROBIAL INFECTION)</scope>
</reference>
<reference key="22">
    <citation type="journal article" date="2009" name="Structure">
        <title>Structure of the pseudokinase VRK3 reveals a degraded catalytic site, a highly conserved kinase fold, and a putative regulatory binding site.</title>
        <authorList>
            <person name="Scheeff E.D."/>
            <person name="Eswaran J."/>
            <person name="Bunkoczi G."/>
            <person name="Knapp S."/>
            <person name="Manning G."/>
        </authorList>
    </citation>
    <scope>X-RAY CRYSTALLOGRAPHY (1.7 ANGSTROMS) OF 14-335</scope>
</reference>
<reference key="23">
    <citation type="journal article" date="2007" name="Nature">
        <title>Patterns of somatic mutation in human cancer genomes.</title>
        <authorList>
            <person name="Greenman C."/>
            <person name="Stephens P."/>
            <person name="Smith R."/>
            <person name="Dalgliesh G.L."/>
            <person name="Hunter C."/>
            <person name="Bignell G."/>
            <person name="Davies H."/>
            <person name="Teague J."/>
            <person name="Butler A."/>
            <person name="Stevens C."/>
            <person name="Edkins S."/>
            <person name="O'Meara S."/>
            <person name="Vastrik I."/>
            <person name="Schmidt E.E."/>
            <person name="Avis T."/>
            <person name="Barthorpe S."/>
            <person name="Bhamra G."/>
            <person name="Buck G."/>
            <person name="Choudhury B."/>
            <person name="Clements J."/>
            <person name="Cole J."/>
            <person name="Dicks E."/>
            <person name="Forbes S."/>
            <person name="Gray K."/>
            <person name="Halliday K."/>
            <person name="Harrison R."/>
            <person name="Hills K."/>
            <person name="Hinton J."/>
            <person name="Jenkinson A."/>
            <person name="Jones D."/>
            <person name="Menzies A."/>
            <person name="Mironenko T."/>
            <person name="Perry J."/>
            <person name="Raine K."/>
            <person name="Richardson D."/>
            <person name="Shepherd R."/>
            <person name="Small A."/>
            <person name="Tofts C."/>
            <person name="Varian J."/>
            <person name="Webb T."/>
            <person name="West S."/>
            <person name="Widaa S."/>
            <person name="Yates A."/>
            <person name="Cahill D.P."/>
            <person name="Louis D.N."/>
            <person name="Goldstraw P."/>
            <person name="Nicholson A.G."/>
            <person name="Brasseur F."/>
            <person name="Looijenga L."/>
            <person name="Weber B.L."/>
            <person name="Chiew Y.-E."/>
            <person name="DeFazio A."/>
            <person name="Greaves M.F."/>
            <person name="Green A.R."/>
            <person name="Campbell P."/>
            <person name="Birney E."/>
            <person name="Easton D.F."/>
            <person name="Chenevix-Trench G."/>
            <person name="Tan M.-H."/>
            <person name="Khoo S.K."/>
            <person name="Teh B.T."/>
            <person name="Yuen S.T."/>
            <person name="Leung S.Y."/>
            <person name="Wooster R."/>
            <person name="Futreal P.A."/>
            <person name="Stratton M.R."/>
        </authorList>
    </citation>
    <scope>VARIANTS [LARGE SCALE ANALYSIS] ASP-50; MET-157 AND VAL-167</scope>
</reference>
<organism>
    <name type="scientific">Homo sapiens</name>
    <name type="common">Human</name>
    <dbReference type="NCBI Taxonomy" id="9606"/>
    <lineage>
        <taxon>Eukaryota</taxon>
        <taxon>Metazoa</taxon>
        <taxon>Chordata</taxon>
        <taxon>Craniata</taxon>
        <taxon>Vertebrata</taxon>
        <taxon>Euteleostomi</taxon>
        <taxon>Mammalia</taxon>
        <taxon>Eutheria</taxon>
        <taxon>Euarchontoglires</taxon>
        <taxon>Primates</taxon>
        <taxon>Haplorrhini</taxon>
        <taxon>Catarrhini</taxon>
        <taxon>Hominidae</taxon>
        <taxon>Homo</taxon>
    </lineage>
</organism>
<feature type="chain" id="PRO_0000086806" description="Serine/threonine-protein kinase VRK2">
    <location>
        <begin position="1"/>
        <end position="508"/>
    </location>
</feature>
<feature type="transmembrane region" description="Helical; Anchor for type IV membrane protein" evidence="2">
    <location>
        <begin position="487"/>
        <end position="507"/>
    </location>
</feature>
<feature type="domain" description="Protein kinase" evidence="3">
    <location>
        <begin position="29"/>
        <end position="319"/>
    </location>
</feature>
<feature type="region of interest" description="Interaction with MAP3K7" evidence="11">
    <location>
        <begin position="397"/>
        <end position="508"/>
    </location>
</feature>
<feature type="active site" description="Proton acceptor" evidence="3 4">
    <location>
        <position position="166"/>
    </location>
</feature>
<feature type="binding site" evidence="3">
    <location>
        <begin position="35"/>
        <end position="43"/>
    </location>
    <ligand>
        <name>ATP</name>
        <dbReference type="ChEBI" id="CHEBI:30616"/>
    </ligand>
</feature>
<feature type="binding site" evidence="3">
    <location>
        <position position="61"/>
    </location>
    <ligand>
        <name>ATP</name>
        <dbReference type="ChEBI" id="CHEBI:30616"/>
    </ligand>
</feature>
<feature type="modified residue" description="Phosphothreonine" evidence="22">
    <location>
        <position position="336"/>
    </location>
</feature>
<feature type="modified residue" description="Phosphoserine" evidence="23">
    <location>
        <position position="406"/>
    </location>
</feature>
<feature type="splice variant" id="VSP_008534" description="In isoform 4." evidence="18 20">
    <location>
        <begin position="1"/>
        <end position="118"/>
    </location>
</feature>
<feature type="splice variant" id="VSP_008533" description="In isoform 3." evidence="20">
    <location>
        <begin position="1"/>
        <end position="23"/>
    </location>
</feature>
<feature type="splice variant" id="VSP_008537" description="In isoform 2." evidence="19">
    <original>EST</original>
    <variation>VEA</variation>
    <location>
        <begin position="395"/>
        <end position="397"/>
    </location>
</feature>
<feature type="splice variant" id="VSP_008535" description="In isoform 5." evidence="20">
    <original>ES</original>
    <variation>FR</variation>
    <location>
        <begin position="395"/>
        <end position="396"/>
    </location>
</feature>
<feature type="splice variant" id="VSP_008536" description="In isoform 5." evidence="20">
    <location>
        <begin position="397"/>
        <end position="508"/>
    </location>
</feature>
<feature type="splice variant" id="VSP_008538" description="In isoform 2." evidence="19">
    <location>
        <begin position="398"/>
        <end position="508"/>
    </location>
</feature>
<feature type="sequence variant" id="VAR_041293" description="In dbSNP:rs34130684." evidence="10">
    <original>N</original>
    <variation>D</variation>
    <location>
        <position position="50"/>
    </location>
</feature>
<feature type="sequence variant" id="VAR_041294" description="In dbSNP:rs35966666." evidence="10">
    <original>I</original>
    <variation>M</variation>
    <location>
        <position position="157"/>
    </location>
</feature>
<feature type="sequence variant" id="VAR_017095" description="In dbSNP:rs1051061." evidence="6 8 10 17">
    <original>I</original>
    <variation>V</variation>
    <location>
        <position position="167"/>
    </location>
</feature>
<feature type="sequence variant" id="VAR_051681" description="In dbSNP:rs36081172.">
    <original>N</original>
    <variation>S</variation>
    <location>
        <position position="211"/>
    </location>
</feature>
<feature type="sequence conflict" description="In Ref. 3; AAO73048/AAO73049/AAO73051." evidence="21" ref="3">
    <original>K</original>
    <variation>E</variation>
    <location>
        <position position="419"/>
    </location>
</feature>
<feature type="strand" evidence="24">
    <location>
        <begin position="20"/>
        <end position="22"/>
    </location>
</feature>
<feature type="strand" evidence="24">
    <location>
        <begin position="28"/>
        <end position="34"/>
    </location>
</feature>
<feature type="strand" evidence="24">
    <location>
        <begin position="43"/>
        <end position="51"/>
    </location>
</feature>
<feature type="helix" evidence="24">
    <location>
        <begin position="53"/>
        <end position="55"/>
    </location>
</feature>
<feature type="strand" evidence="24">
    <location>
        <begin position="58"/>
        <end position="64"/>
    </location>
</feature>
<feature type="strand" evidence="25">
    <location>
        <begin position="65"/>
        <end position="67"/>
    </location>
</feature>
<feature type="helix" evidence="24">
    <location>
        <begin position="69"/>
        <end position="80"/>
    </location>
</feature>
<feature type="helix" evidence="24">
    <location>
        <begin position="83"/>
        <end position="93"/>
    </location>
</feature>
<feature type="strand" evidence="24">
    <location>
        <begin position="103"/>
        <end position="113"/>
    </location>
</feature>
<feature type="strand" evidence="24">
    <location>
        <begin position="115"/>
        <end position="122"/>
    </location>
</feature>
<feature type="strand" evidence="24">
    <location>
        <begin position="124"/>
        <end position="127"/>
    </location>
</feature>
<feature type="helix" evidence="24">
    <location>
        <begin position="128"/>
        <end position="131"/>
    </location>
</feature>
<feature type="helix" evidence="24">
    <location>
        <begin position="134"/>
        <end position="136"/>
    </location>
</feature>
<feature type="helix" evidence="24">
    <location>
        <begin position="140"/>
        <end position="159"/>
    </location>
</feature>
<feature type="helix" evidence="24">
    <location>
        <begin position="169"/>
        <end position="171"/>
    </location>
</feature>
<feature type="strand" evidence="24">
    <location>
        <begin position="172"/>
        <end position="178"/>
    </location>
</feature>
<feature type="strand" evidence="24">
    <location>
        <begin position="181"/>
        <end position="184"/>
    </location>
</feature>
<feature type="helix" evidence="26">
    <location>
        <begin position="187"/>
        <end position="189"/>
    </location>
</feature>
<feature type="strand" evidence="24">
    <location>
        <begin position="191"/>
        <end position="194"/>
    </location>
</feature>
<feature type="helix" evidence="24">
    <location>
        <begin position="195"/>
        <end position="197"/>
    </location>
</feature>
<feature type="helix" evidence="24">
    <location>
        <begin position="206"/>
        <end position="208"/>
    </location>
</feature>
<feature type="turn" evidence="24">
    <location>
        <begin position="214"/>
        <end position="216"/>
    </location>
</feature>
<feature type="helix" evidence="24">
    <location>
        <begin position="219"/>
        <end position="223"/>
    </location>
</feature>
<feature type="helix" evidence="24">
    <location>
        <begin position="229"/>
        <end position="245"/>
    </location>
</feature>
<feature type="helix" evidence="24">
    <location>
        <begin position="251"/>
        <end position="253"/>
    </location>
</feature>
<feature type="helix" evidence="24">
    <location>
        <begin position="257"/>
        <end position="269"/>
    </location>
</feature>
<feature type="turn" evidence="24">
    <location>
        <begin position="270"/>
        <end position="272"/>
    </location>
</feature>
<feature type="helix" evidence="24">
    <location>
        <begin position="273"/>
        <end position="278"/>
    </location>
</feature>
<feature type="helix" evidence="24">
    <location>
        <begin position="286"/>
        <end position="296"/>
    </location>
</feature>
<feature type="helix" evidence="24">
    <location>
        <begin position="306"/>
        <end position="313"/>
    </location>
</feature>
<keyword id="KW-0002">3D-structure</keyword>
<keyword id="KW-0025">Alternative splicing</keyword>
<keyword id="KW-0067">ATP-binding</keyword>
<keyword id="KW-0963">Cytoplasm</keyword>
<keyword id="KW-0256">Endoplasmic reticulum</keyword>
<keyword id="KW-0945">Host-virus interaction</keyword>
<keyword id="KW-0418">Kinase</keyword>
<keyword id="KW-0472">Membrane</keyword>
<keyword id="KW-0496">Mitochondrion</keyword>
<keyword id="KW-0547">Nucleotide-binding</keyword>
<keyword id="KW-0539">Nucleus</keyword>
<keyword id="KW-0597">Phosphoprotein</keyword>
<keyword id="KW-1267">Proteomics identification</keyword>
<keyword id="KW-1185">Reference proteome</keyword>
<keyword id="KW-0723">Serine/threonine-protein kinase</keyword>
<keyword id="KW-0808">Transferase</keyword>
<keyword id="KW-0812">Transmembrane</keyword>
<keyword id="KW-1133">Transmembrane helix</keyword>
<accession>Q86Y07</accession>
<accession>B4DKL0</accession>
<accession>D6W5D4</accession>
<accession>D6W5D6</accession>
<accession>Q49AK9</accession>
<accession>Q53EU9</accession>
<accession>Q53S39</accession>
<accession>Q53S77</accession>
<accession>Q53TU1</accession>
<accession>Q86Y08</accession>
<accession>Q86Y09</accession>
<accession>Q86Y10</accession>
<accession>Q86Y11</accession>
<accession>Q86Y12</accession>
<accession>Q8IXI5</accession>
<accession>Q99987</accession>
<gene>
    <name type="primary">VRK2</name>
</gene>
<name>VRK2_HUMAN</name>
<comment type="function">
    <text evidence="5 7 8 11 12 13 14">Serine/threonine kinase that regulates several signal transduction pathways (PubMed:14645249, PubMed:16495336, PubMed:16704422, PubMed:17709393, PubMed:18286207, PubMed:18617507, PubMed:20679487). Isoform 1 modulates the stress response to hypoxia and cytokines, such as interleukin-1 beta (IL1B) and this is dependent on its interaction with MAPK8IP1, which assembles mitogen-activated protein kinase (MAPK) complexes (PubMed:17709393). Inhibition of signal transmission mediated by the assembly of MAPK8IP1-MAPK complexes reduces JNK phosphorylation and JUN-dependent transcription (PubMed:18286207). Phosphorylates 'Thr-18' of p53/TP53, histone H3, and may also phosphorylate MAPK8IP1 (PubMed:16704422). Phosphorylates BANF1 and disrupts its ability to bind DNA and reduces its binding to LEM domain-containing proteins (PubMed:16495336). Down-regulates the transactivation of transcription induced by ERBB2, HRAS, BRAF, and MEK1 (PubMed:20679487). Blocks the phosphorylation of ERK in response to ERBB2 and HRAS (PubMed:20679487). Can also phosphorylate the following substrates that are commonly used to establish in vitro kinase activity: casein, MBP and histone H2B, but it is not sure that this is physiologically relevant (PubMed:14645249).</text>
</comment>
<comment type="function">
    <molecule>Isoform 2</molecule>
    <text evidence="8">Phosphorylates 'Thr-18' of p53/TP53, as well as histone H3. Reduces p53/TP53 ubiquitination by MDM2, promotes p53/TP53 acetylation by EP300 and thereby increases p53/TP53 stability and activity.</text>
</comment>
<comment type="catalytic activity">
    <reaction evidence="7">
        <text>L-seryl-[protein] + ATP = O-phospho-L-seryl-[protein] + ADP + H(+)</text>
        <dbReference type="Rhea" id="RHEA:17989"/>
        <dbReference type="Rhea" id="RHEA-COMP:9863"/>
        <dbReference type="Rhea" id="RHEA-COMP:11604"/>
        <dbReference type="ChEBI" id="CHEBI:15378"/>
        <dbReference type="ChEBI" id="CHEBI:29999"/>
        <dbReference type="ChEBI" id="CHEBI:30616"/>
        <dbReference type="ChEBI" id="CHEBI:83421"/>
        <dbReference type="ChEBI" id="CHEBI:456216"/>
        <dbReference type="EC" id="2.7.11.1"/>
    </reaction>
    <physiologicalReaction direction="left-to-right" evidence="7">
        <dbReference type="Rhea" id="RHEA:17990"/>
    </physiologicalReaction>
</comment>
<comment type="catalytic activity">
    <reaction evidence="7 8">
        <text>L-threonyl-[protein] + ATP = O-phospho-L-threonyl-[protein] + ADP + H(+)</text>
        <dbReference type="Rhea" id="RHEA:46608"/>
        <dbReference type="Rhea" id="RHEA-COMP:11060"/>
        <dbReference type="Rhea" id="RHEA-COMP:11605"/>
        <dbReference type="ChEBI" id="CHEBI:15378"/>
        <dbReference type="ChEBI" id="CHEBI:30013"/>
        <dbReference type="ChEBI" id="CHEBI:30616"/>
        <dbReference type="ChEBI" id="CHEBI:61977"/>
        <dbReference type="ChEBI" id="CHEBI:456216"/>
        <dbReference type="EC" id="2.7.11.1"/>
    </reaction>
    <physiologicalReaction direction="left-to-right" evidence="7 8">
        <dbReference type="Rhea" id="RHEA:46609"/>
    </physiologicalReaction>
</comment>
<comment type="activity regulation">
    <text evidence="13">RAN inhibits its autophosphorylation and its ability to phosphorylate histone H3.</text>
</comment>
<comment type="subunit">
    <text evidence="11 12 13 14">Isoform 1 interacts with MAP3K7, MAP2K7, MAP2K1 and KSR1 (PubMed:17709393, PubMed:18286207, PubMed:20679487). Isoform 1 and isoform 2 interact with RAN and MAPK8IP1 (PubMed:18286207, PubMed:18617507).</text>
</comment>
<comment type="subunit">
    <text evidence="9">(Microbial infection) Isoform 1 interacts with Epstein-Barr virus BHRF1; this interaction is involved in protecting cells from apoptosis.</text>
</comment>
<comment type="subunit">
    <text evidence="15 16">(Microbial infection) Isoform 1 interacts with vaccinia protein B12.</text>
</comment>
<comment type="interaction">
    <interactant intactId="EBI-1207615">
        <id>Q86Y07</id>
    </interactant>
    <interactant intactId="EBI-13059134">
        <id>Q13520</id>
        <label>AQP6</label>
    </interactant>
    <organismsDiffer>false</organismsDiffer>
    <experiments>3</experiments>
</comment>
<comment type="interaction">
    <interactant intactId="EBI-1207615">
        <id>Q86Y07</id>
    </interactant>
    <interactant intactId="EBI-750433">
        <id>P36382</id>
        <label>GJA5</label>
    </interactant>
    <organismsDiffer>false</organismsDiffer>
    <experiments>3</experiments>
</comment>
<comment type="interaction">
    <interactant intactId="EBI-1207615">
        <id>Q86Y07</id>
    </interactant>
    <interactant intactId="EBI-486984">
        <id>Q8IVT5</id>
        <label>KSR1</label>
    </interactant>
    <organismsDiffer>false</organismsDiffer>
    <experiments>4</experiments>
</comment>
<comment type="interaction">
    <interactant intactId="EBI-1207615">
        <id>Q86Y07</id>
    </interactant>
    <interactant intactId="EBI-492564">
        <id>Q02750</id>
        <label>MAP2K1</label>
    </interactant>
    <organismsDiffer>false</organismsDiffer>
    <experiments>2</experiments>
</comment>
<comment type="interaction">
    <interactant intactId="EBI-1207615">
        <id>Q86Y07</id>
    </interactant>
    <interactant intactId="EBI-6163737">
        <id>Q8N4V1</id>
        <label>MMGT1</label>
    </interactant>
    <organismsDiffer>false</organismsDiffer>
    <experiments>3</experiments>
</comment>
<comment type="interaction">
    <interactant intactId="EBI-1207615">
        <id>Q86Y07</id>
    </interactant>
    <interactant intactId="EBI-18271435">
        <id>Q0VAB0</id>
        <label>TBXA2R</label>
    </interactant>
    <organismsDiffer>false</organismsDiffer>
    <experiments>3</experiments>
</comment>
<comment type="interaction">
    <interactant intactId="EBI-1207615">
        <id>Q86Y07</id>
    </interactant>
    <interactant intactId="EBI-8638294">
        <id>Q9NUH8</id>
        <label>TMEM14B</label>
    </interactant>
    <organismsDiffer>false</organismsDiffer>
    <experiments>3</experiments>
</comment>
<comment type="interaction">
    <interactant intactId="EBI-1207615">
        <id>Q86Y07</id>
    </interactant>
    <interactant intactId="EBI-6269551">
        <id>Q6UW68</id>
        <label>TMEM205</label>
    </interactant>
    <organismsDiffer>false</organismsDiffer>
    <experiments>3</experiments>
</comment>
<comment type="interaction">
    <interactant intactId="EBI-1207615">
        <id>Q86Y07</id>
    </interactant>
    <interactant intactId="EBI-17198826">
        <id>Q6PEY1</id>
        <label>TMEM88</label>
    </interactant>
    <organismsDiffer>false</organismsDiffer>
    <experiments>3</experiments>
</comment>
<comment type="interaction">
    <interactant intactId="EBI-1207615">
        <id>Q86Y07</id>
    </interactant>
    <interactant intactId="EBI-1207659">
        <id>P03182</id>
        <label>BHRF1</label>
    </interactant>
    <organismsDiffer>true</organismsDiffer>
    <experiments>7</experiments>
</comment>
<comment type="interaction">
    <interactant intactId="EBI-1207633">
        <id>Q86Y07-1</id>
    </interactant>
    <interactant intactId="EBI-287195">
        <id>Q07817-1</id>
        <label>BCL2L1</label>
    </interactant>
    <organismsDiffer>false</organismsDiffer>
    <experiments>2</experiments>
</comment>
<comment type="interaction">
    <interactant intactId="EBI-1207633">
        <id>Q86Y07-1</id>
    </interactant>
    <interactant intactId="EBI-492564">
        <id>Q02750</id>
        <label>MAP2K1</label>
    </interactant>
    <organismsDiffer>false</organismsDiffer>
    <experiments>2</experiments>
</comment>
<comment type="interaction">
    <interactant intactId="EBI-1207633">
        <id>Q86Y07-1</id>
    </interactant>
    <interactant intactId="EBI-716258">
        <id>Q13469</id>
        <label>NFATC2</label>
    </interactant>
    <organismsDiffer>false</organismsDiffer>
    <experiments>3</experiments>
</comment>
<comment type="interaction">
    <interactant intactId="EBI-1207633">
        <id>Q86Y07-1</id>
    </interactant>
    <interactant intactId="EBI-286642">
        <id>P62826</id>
        <label>RAN</label>
    </interactant>
    <organismsDiffer>false</organismsDiffer>
    <experiments>2</experiments>
</comment>
<comment type="interaction">
    <interactant intactId="EBI-1207633">
        <id>Q86Y07-1</id>
    </interactant>
    <interactant intactId="EBI-1536336">
        <id>Q61097</id>
        <label>Ksr1</label>
    </interactant>
    <organismsDiffer>true</organismsDiffer>
    <experiments>8</experiments>
</comment>
<comment type="interaction">
    <interactant intactId="EBI-1207633">
        <id>Q86Y07-1</id>
    </interactant>
    <interactant intactId="EBI-1775345">
        <id>Q62073</id>
        <label>Map3k7</label>
    </interactant>
    <organismsDiffer>true</organismsDiffer>
    <experiments>3</experiments>
</comment>
<comment type="interaction">
    <interactant intactId="EBI-1207633">
        <id>Q86Y07-1</id>
    </interactant>
    <interactant intactId="EBI-643104">
        <id>Q60591</id>
        <label>Nfatc2</label>
    </interactant>
    <organismsDiffer>true</organismsDiffer>
    <experiments>2</experiments>
</comment>
<comment type="interaction">
    <interactant intactId="EBI-1207633">
        <id>Q86Y07-1</id>
    </interactant>
    <interactant intactId="EBI-1778503">
        <id>Q8CF89</id>
        <label>Tab1</label>
    </interactant>
    <organismsDiffer>true</organismsDiffer>
    <experiments>2</experiments>
</comment>
<comment type="interaction">
    <interactant intactId="EBI-1207636">
        <id>Q86Y07-2</id>
    </interactant>
    <interactant intactId="EBI-716258">
        <id>Q13469</id>
        <label>NFATC2</label>
    </interactant>
    <organismsDiffer>false</organismsDiffer>
    <experiments>4</experiments>
</comment>
<comment type="interaction">
    <interactant intactId="EBI-1207636">
        <id>Q86Y07-2</id>
    </interactant>
    <interactant intactId="EBI-288464">
        <id>Q9WVI9-2</id>
        <label>Mapk8ip1</label>
    </interactant>
    <organismsDiffer>true</organismsDiffer>
    <experiments>2</experiments>
</comment>
<comment type="interaction">
    <interactant intactId="EBI-1207649">
        <id>Q86Y07-5</id>
    </interactant>
    <interactant intactId="EBI-286642">
        <id>P62826</id>
        <label>RAN</label>
    </interactant>
    <organismsDiffer>false</organismsDiffer>
    <experiments>2</experiments>
</comment>
<comment type="subcellular location">
    <molecule>Isoform 1</molecule>
    <subcellularLocation>
        <location evidence="8">Cytoplasm</location>
    </subcellularLocation>
    <subcellularLocation>
        <location evidence="8">Endoplasmic reticulum membrane</location>
        <topology evidence="2">Single-pass type IV membrane protein</topology>
    </subcellularLocation>
    <subcellularLocation>
        <location evidence="8">Mitochondrion membrane</location>
        <topology evidence="2">Single-pass type IV membrane protein</topology>
    </subcellularLocation>
    <subcellularLocation>
        <location evidence="1">Nucleus envelope</location>
    </subcellularLocation>
</comment>
<comment type="subcellular location">
    <molecule>Isoform 2</molecule>
    <subcellularLocation>
        <location evidence="8">Cytoplasm</location>
    </subcellularLocation>
    <subcellularLocation>
        <location evidence="8">Nucleus</location>
    </subcellularLocation>
</comment>
<comment type="alternative products">
    <event type="alternative splicing"/>
    <isoform>
        <id>Q86Y07-1</id>
        <name>1</name>
        <name evidence="19">VRK2A</name>
        <sequence type="displayed"/>
    </isoform>
    <isoform>
        <id>Q86Y07-2</id>
        <name>2</name>
        <name evidence="19">VRK2B</name>
        <sequence type="described" ref="VSP_008537 VSP_008538"/>
    </isoform>
    <isoform>
        <id>Q86Y07-3</id>
        <name>3</name>
        <sequence type="described" ref="VSP_008533"/>
    </isoform>
    <isoform>
        <id>Q86Y07-4</id>
        <name>4</name>
        <name>5</name>
        <sequence type="described" ref="VSP_008534"/>
    </isoform>
    <isoform>
        <id>Q86Y07-5</id>
        <name>5</name>
        <name>6</name>
        <sequence type="described" ref="VSP_008535 VSP_008536"/>
    </isoform>
</comment>
<comment type="tissue specificity">
    <text evidence="8 14 17">Isoform 1 and isoform 2 are expressed in various tumor cell lines. Expression of isoform 1 inversely correlates with ERBB2 in breast carcinomas (at protein level). Widely expressed. Highly expressed in fetal liver, skeletal muscle, pancreas, heart, peripheral blood leukocytes and testis.</text>
</comment>
<comment type="PTM">
    <molecule>Isoform 1</molecule>
    <text evidence="5 8">Autophosphorylated.</text>
</comment>
<comment type="PTM">
    <molecule>Isoform 2</molecule>
    <text evidence="8">Autophosphorylated.</text>
</comment>
<comment type="similarity">
    <text evidence="21">Belongs to the protein kinase superfamily. CK1 Ser/Thr protein kinase family. VRK subfamily.</text>
</comment>
<comment type="sequence caution" evidence="21">
    <conflict type="miscellaneous discrepancy">
        <sequence resource="EMBL-CDS" id="CAD54446"/>
    </conflict>
    <text>Aberrant splicing.</text>
</comment>
<comment type="online information" name="Atlas of Genetics and Cytogenetics in Oncology and Haematology">
    <link uri="https://atlasgeneticsoncology.org/gene/42799/VRK2"/>
</comment>
<evidence type="ECO:0000250" key="1">
    <source>
        <dbReference type="UniProtKB" id="Q8BN21"/>
    </source>
</evidence>
<evidence type="ECO:0000255" key="2"/>
<evidence type="ECO:0000255" key="3">
    <source>
        <dbReference type="PROSITE-ProRule" id="PRU00159"/>
    </source>
</evidence>
<evidence type="ECO:0000255" key="4">
    <source>
        <dbReference type="PROSITE-ProRule" id="PRU10027"/>
    </source>
</evidence>
<evidence type="ECO:0000269" key="5">
    <source>
    </source>
</evidence>
<evidence type="ECO:0000269" key="6">
    <source>
    </source>
</evidence>
<evidence type="ECO:0000269" key="7">
    <source>
    </source>
</evidence>
<evidence type="ECO:0000269" key="8">
    <source>
    </source>
</evidence>
<evidence type="ECO:0000269" key="9">
    <source>
    </source>
</evidence>
<evidence type="ECO:0000269" key="10">
    <source>
    </source>
</evidence>
<evidence type="ECO:0000269" key="11">
    <source>
    </source>
</evidence>
<evidence type="ECO:0000269" key="12">
    <source>
    </source>
</evidence>
<evidence type="ECO:0000269" key="13">
    <source>
    </source>
</evidence>
<evidence type="ECO:0000269" key="14">
    <source>
    </source>
</evidence>
<evidence type="ECO:0000269" key="15">
    <source>
    </source>
</evidence>
<evidence type="ECO:0000269" key="16">
    <source>
    </source>
</evidence>
<evidence type="ECO:0000269" key="17">
    <source>
    </source>
</evidence>
<evidence type="ECO:0000303" key="18">
    <source>
    </source>
</evidence>
<evidence type="ECO:0000303" key="19">
    <source>
    </source>
</evidence>
<evidence type="ECO:0000303" key="20">
    <source ref="3"/>
</evidence>
<evidence type="ECO:0000305" key="21"/>
<evidence type="ECO:0007744" key="22">
    <source>
    </source>
</evidence>
<evidence type="ECO:0007744" key="23">
    <source>
    </source>
</evidence>
<evidence type="ECO:0007829" key="24">
    <source>
        <dbReference type="PDB" id="2V62"/>
    </source>
</evidence>
<evidence type="ECO:0007829" key="25">
    <source>
        <dbReference type="PDB" id="5UU1"/>
    </source>
</evidence>
<evidence type="ECO:0007829" key="26">
    <source>
        <dbReference type="PDB" id="6NCG"/>
    </source>
</evidence>
<protein>
    <recommendedName>
        <fullName>Serine/threonine-protein kinase VRK2</fullName>
        <ecNumber evidence="7 8">2.7.11.1</ecNumber>
    </recommendedName>
    <alternativeName>
        <fullName>Vaccinia-related kinase 2</fullName>
    </alternativeName>
</protein>
<sequence>MPPKRNEKYKLPIPFPEGKVLDDMEGNQWVLGKKIGSGGFGLIYLAFPTNKPEKDARHVVKVEYQENGPLFSELKFYQRVAKKDCIKKWIERKQLDYLGIPLFYGSGLTEFKGRSYRFMVMERLGIDLQKISGQNGTFKKSTVLQLGIRMLDVLEYIHENEYVHGDIKAANLLLGYKNPDQVYLADYGLSYRYCPNGNHKQYQENPRKGHNGTIEFTSLDAHKGVALSRRSDVEILGYCMLRWLCGKLPWEQNLKDPVAVQTAKTNLLDELPQSVLKWAPSGSSCCEIAQFLVCAHSLAYDEKPNYQALKKILNPHGIPLGPLDFSTKGQSINVHTPNSQKVDSQKAATKQVNKAHNRLIEKKVHSERSAESCATWKVQKEEKLIGLMNNEAAQESTRRRQKYQESQEPLNEVNSFPQKISYTQFPNSFYEPHQDFTSPDIFKKSRSPSWYKYTSTVSTGITDLESSTGLWPTISQFTLSEETNADVYYYRIIIPVLLMLVFLALFFL</sequence>
<proteinExistence type="evidence at protein level"/>
<dbReference type="EC" id="2.7.11.1" evidence="7 8"/>
<dbReference type="EMBL" id="AB000450">
    <property type="protein sequence ID" value="BAA19109.1"/>
    <property type="molecule type" value="mRNA"/>
</dbReference>
<dbReference type="EMBL" id="AJ512204">
    <property type="protein sequence ID" value="CAD54446.2"/>
    <property type="status" value="ALT_SEQ"/>
    <property type="molecule type" value="mRNA"/>
</dbReference>
<dbReference type="EMBL" id="AY228367">
    <property type="protein sequence ID" value="AAO73047.1"/>
    <property type="molecule type" value="mRNA"/>
</dbReference>
<dbReference type="EMBL" id="AY228368">
    <property type="protein sequence ID" value="AAO73048.1"/>
    <property type="molecule type" value="mRNA"/>
</dbReference>
<dbReference type="EMBL" id="AY228369">
    <property type="protein sequence ID" value="AAO73049.1"/>
    <property type="molecule type" value="mRNA"/>
</dbReference>
<dbReference type="EMBL" id="AY228370">
    <property type="protein sequence ID" value="AAO73050.1"/>
    <property type="molecule type" value="mRNA"/>
</dbReference>
<dbReference type="EMBL" id="AY228371">
    <property type="protein sequence ID" value="AAO73051.1"/>
    <property type="molecule type" value="mRNA"/>
</dbReference>
<dbReference type="EMBL" id="AY228372">
    <property type="protein sequence ID" value="AAO73052.1"/>
    <property type="molecule type" value="mRNA"/>
</dbReference>
<dbReference type="EMBL" id="AK296611">
    <property type="protein sequence ID" value="BAG59222.1"/>
    <property type="molecule type" value="mRNA"/>
</dbReference>
<dbReference type="EMBL" id="AK223540">
    <property type="protein sequence ID" value="BAD97260.1"/>
    <property type="molecule type" value="mRNA"/>
</dbReference>
<dbReference type="EMBL" id="AC007250">
    <property type="protein sequence ID" value="AAY15019.1"/>
    <property type="molecule type" value="Genomic_DNA"/>
</dbReference>
<dbReference type="EMBL" id="AC068193">
    <property type="protein sequence ID" value="AAX93262.1"/>
    <property type="molecule type" value="Genomic_DNA"/>
</dbReference>
<dbReference type="EMBL" id="AC073215">
    <property type="protein sequence ID" value="AAY14648.1"/>
    <property type="molecule type" value="Genomic_DNA"/>
</dbReference>
<dbReference type="EMBL" id="CH471053">
    <property type="protein sequence ID" value="EAX00062.1"/>
    <property type="molecule type" value="Genomic_DNA"/>
</dbReference>
<dbReference type="EMBL" id="CH471053">
    <property type="protein sequence ID" value="EAX00064.1"/>
    <property type="molecule type" value="Genomic_DNA"/>
</dbReference>
<dbReference type="EMBL" id="CH471053">
    <property type="protein sequence ID" value="EAX00066.1"/>
    <property type="molecule type" value="Genomic_DNA"/>
</dbReference>
<dbReference type="EMBL" id="CH471053">
    <property type="protein sequence ID" value="EAX00067.1"/>
    <property type="molecule type" value="Genomic_DNA"/>
</dbReference>
<dbReference type="EMBL" id="CH471053">
    <property type="protein sequence ID" value="EAX00068.1"/>
    <property type="molecule type" value="Genomic_DNA"/>
</dbReference>
<dbReference type="EMBL" id="BC027854">
    <property type="protein sequence ID" value="AAH27854.1"/>
    <property type="molecule type" value="mRNA"/>
</dbReference>
<dbReference type="CCDS" id="CCDS1859.1">
    <molecule id="Q86Y07-1"/>
</dbReference>
<dbReference type="CCDS" id="CCDS46291.1">
    <molecule id="Q86Y07-5"/>
</dbReference>
<dbReference type="CCDS" id="CCDS46292.1">
    <molecule id="Q86Y07-3"/>
</dbReference>
<dbReference type="CCDS" id="CCDS46293.1">
    <molecule id="Q86Y07-4"/>
</dbReference>
<dbReference type="RefSeq" id="NP_001123952.1">
    <molecule id="Q86Y07-1"/>
    <property type="nucleotide sequence ID" value="NM_001130480.2"/>
</dbReference>
<dbReference type="RefSeq" id="NP_001123953.1">
    <molecule id="Q86Y07-1"/>
    <property type="nucleotide sequence ID" value="NM_001130481.2"/>
</dbReference>
<dbReference type="RefSeq" id="NP_001123954.1">
    <molecule id="Q86Y07-3"/>
    <property type="nucleotide sequence ID" value="NM_001130482.2"/>
</dbReference>
<dbReference type="RefSeq" id="NP_001123955.1">
    <molecule id="Q86Y07-5"/>
    <property type="nucleotide sequence ID" value="NM_001130483.2"/>
</dbReference>
<dbReference type="RefSeq" id="NP_001275765.1">
    <molecule id="Q86Y07-4"/>
    <property type="nucleotide sequence ID" value="NM_001288836.1"/>
</dbReference>
<dbReference type="RefSeq" id="NP_001275766.1">
    <molecule id="Q86Y07-1"/>
    <property type="nucleotide sequence ID" value="NM_001288837.2"/>
</dbReference>
<dbReference type="RefSeq" id="NP_001275767.1">
    <molecule id="Q86Y07-5"/>
    <property type="nucleotide sequence ID" value="NM_001288838.2"/>
</dbReference>
<dbReference type="RefSeq" id="NP_001275768.1">
    <molecule id="Q86Y07-4"/>
    <property type="nucleotide sequence ID" value="NM_001288839.2"/>
</dbReference>
<dbReference type="RefSeq" id="NP_006287.2">
    <molecule id="Q86Y07-1"/>
    <property type="nucleotide sequence ID" value="NM_006296.7"/>
</dbReference>
<dbReference type="RefSeq" id="XP_005264597.1">
    <molecule id="Q86Y07-1"/>
    <property type="nucleotide sequence ID" value="XM_005264540.5"/>
</dbReference>
<dbReference type="RefSeq" id="XP_006712153.1">
    <molecule id="Q86Y07-2"/>
    <property type="nucleotide sequence ID" value="XM_006712090.5"/>
</dbReference>
<dbReference type="RefSeq" id="XP_006712154.1">
    <molecule id="Q86Y07-5"/>
    <property type="nucleotide sequence ID" value="XM_006712091.5"/>
</dbReference>
<dbReference type="RefSeq" id="XP_006712155.1">
    <property type="nucleotide sequence ID" value="XM_006712092.3"/>
</dbReference>
<dbReference type="RefSeq" id="XP_006712156.1">
    <property type="nucleotide sequence ID" value="XM_006712093.3"/>
</dbReference>
<dbReference type="RefSeq" id="XP_011531394.1">
    <molecule id="Q86Y07-1"/>
    <property type="nucleotide sequence ID" value="XM_011533092.4"/>
</dbReference>
<dbReference type="RefSeq" id="XP_016860347.1">
    <property type="nucleotide sequence ID" value="XM_017004858.1"/>
</dbReference>
<dbReference type="RefSeq" id="XP_016860348.1">
    <property type="nucleotide sequence ID" value="XM_017004859.1"/>
</dbReference>
<dbReference type="RefSeq" id="XP_016860349.1">
    <property type="nucleotide sequence ID" value="XM_017004860.1"/>
</dbReference>
<dbReference type="RefSeq" id="XP_016860350.1">
    <property type="nucleotide sequence ID" value="XM_017004861.1"/>
</dbReference>
<dbReference type="RefSeq" id="XP_016860351.1">
    <property type="nucleotide sequence ID" value="XM_017004862.1"/>
</dbReference>
<dbReference type="RefSeq" id="XP_016860352.1">
    <property type="nucleotide sequence ID" value="XM_017004863.1"/>
</dbReference>
<dbReference type="RefSeq" id="XP_047301701.1">
    <molecule id="Q86Y07-4"/>
    <property type="nucleotide sequence ID" value="XM_047445745.1"/>
</dbReference>
<dbReference type="RefSeq" id="XP_047301703.1">
    <molecule id="Q86Y07-4"/>
    <property type="nucleotide sequence ID" value="XM_047445747.1"/>
</dbReference>
<dbReference type="RefSeq" id="XP_047301704.1">
    <molecule id="Q86Y07-4"/>
    <property type="nucleotide sequence ID" value="XM_047445748.1"/>
</dbReference>
<dbReference type="PDB" id="2V62">
    <property type="method" value="X-ray"/>
    <property type="resolution" value="1.70 A"/>
    <property type="chains" value="A/B=14-335"/>
</dbReference>
<dbReference type="PDB" id="5UU1">
    <property type="method" value="X-ray"/>
    <property type="resolution" value="2.00 A"/>
    <property type="chains" value="A=14-335"/>
</dbReference>
<dbReference type="PDB" id="6NCG">
    <property type="method" value="X-ray"/>
    <property type="resolution" value="2.45 A"/>
    <property type="chains" value="A/B=14-335"/>
</dbReference>
<dbReference type="PDB" id="8Q1Z">
    <property type="method" value="X-ray"/>
    <property type="resolution" value="1.85 A"/>
    <property type="chains" value="A=14-335"/>
</dbReference>
<dbReference type="PDB" id="9FET">
    <property type="method" value="X-ray"/>
    <property type="resolution" value="2.40 A"/>
    <property type="chains" value="A=14-335"/>
</dbReference>
<dbReference type="PDBsum" id="2V62"/>
<dbReference type="PDBsum" id="5UU1"/>
<dbReference type="PDBsum" id="6NCG"/>
<dbReference type="PDBsum" id="8Q1Z"/>
<dbReference type="PDBsum" id="9FET"/>
<dbReference type="EMDB" id="EMD-25778"/>
<dbReference type="SMR" id="Q86Y07"/>
<dbReference type="BioGRID" id="113283">
    <property type="interactions" value="279"/>
</dbReference>
<dbReference type="FunCoup" id="Q86Y07">
    <property type="interactions" value="3115"/>
</dbReference>
<dbReference type="IntAct" id="Q86Y07">
    <property type="interactions" value="123"/>
</dbReference>
<dbReference type="MINT" id="Q86Y07"/>
<dbReference type="STRING" id="9606.ENSP00000408002"/>
<dbReference type="BindingDB" id="Q86Y07"/>
<dbReference type="ChEMBL" id="CHEMBL1649059"/>
<dbReference type="DrugCentral" id="Q86Y07"/>
<dbReference type="GlyGen" id="Q86Y07">
    <property type="glycosylation" value="1 site, 1 N-linked glycan (1 site)"/>
</dbReference>
<dbReference type="iPTMnet" id="Q86Y07"/>
<dbReference type="PhosphoSitePlus" id="Q86Y07"/>
<dbReference type="SwissPalm" id="Q86Y07"/>
<dbReference type="BioMuta" id="VRK2"/>
<dbReference type="DMDM" id="90116515"/>
<dbReference type="CPTAC" id="non-CPTAC-5652"/>
<dbReference type="jPOST" id="Q86Y07"/>
<dbReference type="MassIVE" id="Q86Y07"/>
<dbReference type="PaxDb" id="9606-ENSP00000408002"/>
<dbReference type="PeptideAtlas" id="Q86Y07"/>
<dbReference type="ProteomicsDB" id="70345">
    <molecule id="Q86Y07-1"/>
</dbReference>
<dbReference type="ProteomicsDB" id="70346">
    <molecule id="Q86Y07-2"/>
</dbReference>
<dbReference type="ProteomicsDB" id="70347">
    <molecule id="Q86Y07-3"/>
</dbReference>
<dbReference type="ProteomicsDB" id="70348">
    <molecule id="Q86Y07-4"/>
</dbReference>
<dbReference type="ProteomicsDB" id="70349">
    <molecule id="Q86Y07-5"/>
</dbReference>
<dbReference type="Pumba" id="Q86Y07"/>
<dbReference type="Antibodypedia" id="30474">
    <property type="antibodies" value="216 antibodies from 30 providers"/>
</dbReference>
<dbReference type="DNASU" id="7444"/>
<dbReference type="Ensembl" id="ENST00000340157.9">
    <molecule id="Q86Y07-1"/>
    <property type="protein sequence ID" value="ENSP00000342381.4"/>
    <property type="gene ID" value="ENSG00000028116.18"/>
</dbReference>
<dbReference type="Ensembl" id="ENST00000412104.6">
    <molecule id="Q86Y07-4"/>
    <property type="protein sequence ID" value="ENSP00000404156.3"/>
    <property type="gene ID" value="ENSG00000028116.18"/>
</dbReference>
<dbReference type="Ensembl" id="ENST00000417641.6">
    <molecule id="Q86Y07-5"/>
    <property type="protein sequence ID" value="ENSP00000402375.2"/>
    <property type="gene ID" value="ENSG00000028116.18"/>
</dbReference>
<dbReference type="Ensembl" id="ENST00000435505.6">
    <molecule id="Q86Y07-1"/>
    <property type="protein sequence ID" value="ENSP00000408002.2"/>
    <property type="gene ID" value="ENSG00000028116.18"/>
</dbReference>
<dbReference type="Ensembl" id="ENST00000440705.6">
    <molecule id="Q86Y07-3"/>
    <property type="protein sequence ID" value="ENSP00000398323.2"/>
    <property type="gene ID" value="ENSG00000028116.18"/>
</dbReference>
<dbReference type="Ensembl" id="ENST00000648897.1">
    <molecule id="Q86Y07-2"/>
    <property type="protein sequence ID" value="ENSP00000497378.1"/>
    <property type="gene ID" value="ENSG00000028116.18"/>
</dbReference>
<dbReference type="GeneID" id="7444"/>
<dbReference type="KEGG" id="hsa:7444"/>
<dbReference type="MANE-Select" id="ENST00000340157.9">
    <property type="protein sequence ID" value="ENSP00000342381.4"/>
    <property type="RefSeq nucleotide sequence ID" value="NM_006296.7"/>
    <property type="RefSeq protein sequence ID" value="NP_006287.2"/>
</dbReference>
<dbReference type="UCSC" id="uc002rzo.3">
    <molecule id="Q86Y07-1"/>
    <property type="organism name" value="human"/>
</dbReference>
<dbReference type="AGR" id="HGNC:12719"/>
<dbReference type="CTD" id="7444"/>
<dbReference type="DisGeNET" id="7444"/>
<dbReference type="GeneCards" id="VRK2"/>
<dbReference type="HGNC" id="HGNC:12719">
    <property type="gene designation" value="VRK2"/>
</dbReference>
<dbReference type="HPA" id="ENSG00000028116">
    <property type="expression patterns" value="Low tissue specificity"/>
</dbReference>
<dbReference type="MalaCards" id="VRK2"/>
<dbReference type="MIM" id="602169">
    <property type="type" value="gene"/>
</dbReference>
<dbReference type="neXtProt" id="NX_Q86Y07"/>
<dbReference type="OpenTargets" id="ENSG00000028116"/>
<dbReference type="PharmGKB" id="PA37331"/>
<dbReference type="VEuPathDB" id="HostDB:ENSG00000028116"/>
<dbReference type="eggNOG" id="KOG1164">
    <property type="taxonomic scope" value="Eukaryota"/>
</dbReference>
<dbReference type="GeneTree" id="ENSGT00940000158042"/>
<dbReference type="HOGENOM" id="CLU_019279_4_3_1"/>
<dbReference type="InParanoid" id="Q86Y07"/>
<dbReference type="OMA" id="SYRYCPS"/>
<dbReference type="OrthoDB" id="2687620at2759"/>
<dbReference type="PAN-GO" id="Q86Y07">
    <property type="GO annotations" value="6 GO annotations based on evolutionary models"/>
</dbReference>
<dbReference type="PhylomeDB" id="Q86Y07"/>
<dbReference type="TreeFam" id="TF106473"/>
<dbReference type="PathwayCommons" id="Q86Y07"/>
<dbReference type="Reactome" id="R-HSA-2980766">
    <molecule id="Q86Y07-2"/>
    <property type="pathway name" value="Nuclear Envelope Breakdown"/>
</dbReference>
<dbReference type="Reactome" id="R-HSA-2995383">
    <molecule id="Q86Y07-2"/>
    <property type="pathway name" value="Initiation of Nuclear Envelope (NE) Reformation"/>
</dbReference>
<dbReference type="Reactome" id="R-HSA-9013149">
    <property type="pathway name" value="RAC1 GTPase cycle"/>
</dbReference>
<dbReference type="Reactome" id="R-HSA-9013404">
    <property type="pathway name" value="RAC2 GTPase cycle"/>
</dbReference>
<dbReference type="Reactome" id="R-HSA-9013405">
    <property type="pathway name" value="RHOD GTPase cycle"/>
</dbReference>
<dbReference type="Reactome" id="R-HSA-9013408">
    <property type="pathway name" value="RHOG GTPase cycle"/>
</dbReference>
<dbReference type="Reactome" id="R-HSA-9013423">
    <property type="pathway name" value="RAC3 GTPase cycle"/>
</dbReference>
<dbReference type="SignaLink" id="Q86Y07"/>
<dbReference type="SIGNOR" id="Q86Y07"/>
<dbReference type="BioGRID-ORCS" id="7444">
    <property type="hits" value="13 hits in 1200 CRISPR screens"/>
</dbReference>
<dbReference type="ChiTaRS" id="VRK2">
    <property type="organism name" value="human"/>
</dbReference>
<dbReference type="EvolutionaryTrace" id="Q86Y07"/>
<dbReference type="GeneWiki" id="VRK2"/>
<dbReference type="GenomeRNAi" id="7444"/>
<dbReference type="Pharos" id="Q86Y07">
    <property type="development level" value="Tbio"/>
</dbReference>
<dbReference type="PRO" id="PR:Q86Y07"/>
<dbReference type="Proteomes" id="UP000005640">
    <property type="component" value="Chromosome 2"/>
</dbReference>
<dbReference type="RNAct" id="Q86Y07">
    <property type="molecule type" value="protein"/>
</dbReference>
<dbReference type="Bgee" id="ENSG00000028116">
    <property type="expression patterns" value="Expressed in monocyte and 199 other cell types or tissues"/>
</dbReference>
<dbReference type="ExpressionAtlas" id="Q86Y07">
    <property type="expression patterns" value="baseline and differential"/>
</dbReference>
<dbReference type="GO" id="GO:0005737">
    <property type="term" value="C:cytoplasm"/>
    <property type="evidence" value="ECO:0000314"/>
    <property type="project" value="UniProtKB"/>
</dbReference>
<dbReference type="GO" id="GO:0005783">
    <property type="term" value="C:endoplasmic reticulum"/>
    <property type="evidence" value="ECO:0000314"/>
    <property type="project" value="HPA"/>
</dbReference>
<dbReference type="GO" id="GO:0005789">
    <property type="term" value="C:endoplasmic reticulum membrane"/>
    <property type="evidence" value="ECO:0000314"/>
    <property type="project" value="UniProtKB"/>
</dbReference>
<dbReference type="GO" id="GO:0031966">
    <property type="term" value="C:mitochondrial membrane"/>
    <property type="evidence" value="ECO:0000314"/>
    <property type="project" value="UniProtKB"/>
</dbReference>
<dbReference type="GO" id="GO:0005635">
    <property type="term" value="C:nuclear envelope"/>
    <property type="evidence" value="ECO:0000250"/>
    <property type="project" value="UniProtKB"/>
</dbReference>
<dbReference type="GO" id="GO:0005634">
    <property type="term" value="C:nucleus"/>
    <property type="evidence" value="ECO:0000314"/>
    <property type="project" value="UniProtKB"/>
</dbReference>
<dbReference type="GO" id="GO:0032991">
    <property type="term" value="C:protein-containing complex"/>
    <property type="evidence" value="ECO:0000314"/>
    <property type="project" value="MGI"/>
</dbReference>
<dbReference type="GO" id="GO:0005524">
    <property type="term" value="F:ATP binding"/>
    <property type="evidence" value="ECO:0007669"/>
    <property type="project" value="UniProtKB-KW"/>
</dbReference>
<dbReference type="GO" id="GO:0019904">
    <property type="term" value="F:protein domain specific binding"/>
    <property type="evidence" value="ECO:0000314"/>
    <property type="project" value="MGI"/>
</dbReference>
<dbReference type="GO" id="GO:0019901">
    <property type="term" value="F:protein kinase binding"/>
    <property type="evidence" value="ECO:0000314"/>
    <property type="project" value="MGI"/>
</dbReference>
<dbReference type="GO" id="GO:0106310">
    <property type="term" value="F:protein serine kinase activity"/>
    <property type="evidence" value="ECO:0007669"/>
    <property type="project" value="RHEA"/>
</dbReference>
<dbReference type="GO" id="GO:0004674">
    <property type="term" value="F:protein serine/threonine kinase activity"/>
    <property type="evidence" value="ECO:0000314"/>
    <property type="project" value="UniProtKB"/>
</dbReference>
<dbReference type="GO" id="GO:0034599">
    <property type="term" value="P:cellular response to oxidative stress"/>
    <property type="evidence" value="ECO:0000315"/>
    <property type="project" value="UniProtKB"/>
</dbReference>
<dbReference type="GO" id="GO:0006974">
    <property type="term" value="P:DNA damage response"/>
    <property type="evidence" value="ECO:0000318"/>
    <property type="project" value="GO_Central"/>
</dbReference>
<dbReference type="GO" id="GO:0046777">
    <property type="term" value="P:protein autophosphorylation"/>
    <property type="evidence" value="ECO:0000314"/>
    <property type="project" value="UniProtKB"/>
</dbReference>
<dbReference type="GO" id="GO:0006468">
    <property type="term" value="P:protein phosphorylation"/>
    <property type="evidence" value="ECO:0000304"/>
    <property type="project" value="ProtInc"/>
</dbReference>
<dbReference type="GO" id="GO:2000659">
    <property type="term" value="P:regulation of interleukin-1-mediated signaling pathway"/>
    <property type="evidence" value="ECO:0000315"/>
    <property type="project" value="UniProtKB"/>
</dbReference>
<dbReference type="GO" id="GO:0043408">
    <property type="term" value="P:regulation of MAPK cascade"/>
    <property type="evidence" value="ECO:0000315"/>
    <property type="project" value="UniProtKB"/>
</dbReference>
<dbReference type="GO" id="GO:0007165">
    <property type="term" value="P:signal transduction"/>
    <property type="evidence" value="ECO:0000318"/>
    <property type="project" value="GO_Central"/>
</dbReference>
<dbReference type="CDD" id="cd14123">
    <property type="entry name" value="STKc_VRK2"/>
    <property type="match status" value="1"/>
</dbReference>
<dbReference type="FunFam" id="1.10.510.10:FF:000532">
    <property type="entry name" value="VRK serine/threonine kinase 2"/>
    <property type="match status" value="1"/>
</dbReference>
<dbReference type="Gene3D" id="1.10.510.10">
    <property type="entry name" value="Transferase(Phosphotransferase) domain 1"/>
    <property type="match status" value="1"/>
</dbReference>
<dbReference type="InterPro" id="IPR050235">
    <property type="entry name" value="CK1_Ser-Thr_kinase"/>
</dbReference>
<dbReference type="InterPro" id="IPR011009">
    <property type="entry name" value="Kinase-like_dom_sf"/>
</dbReference>
<dbReference type="InterPro" id="IPR000719">
    <property type="entry name" value="Prot_kinase_dom"/>
</dbReference>
<dbReference type="InterPro" id="IPR008271">
    <property type="entry name" value="Ser/Thr_kinase_AS"/>
</dbReference>
<dbReference type="PANTHER" id="PTHR11909">
    <property type="entry name" value="CASEIN KINASE-RELATED"/>
    <property type="match status" value="1"/>
</dbReference>
<dbReference type="Pfam" id="PF00069">
    <property type="entry name" value="Pkinase"/>
    <property type="match status" value="1"/>
</dbReference>
<dbReference type="SMART" id="SM00220">
    <property type="entry name" value="S_TKc"/>
    <property type="match status" value="1"/>
</dbReference>
<dbReference type="SUPFAM" id="SSF56112">
    <property type="entry name" value="Protein kinase-like (PK-like)"/>
    <property type="match status" value="1"/>
</dbReference>
<dbReference type="PROSITE" id="PS50011">
    <property type="entry name" value="PROTEIN_KINASE_DOM"/>
    <property type="match status" value="1"/>
</dbReference>
<dbReference type="PROSITE" id="PS00108">
    <property type="entry name" value="PROTEIN_KINASE_ST"/>
    <property type="match status" value="1"/>
</dbReference>